<name>LACB2_HORSE</name>
<protein>
    <recommendedName>
        <fullName>Beta-lactoglobulin-2</fullName>
        <shortName>Beta-LG-2</shortName>
    </recommendedName>
    <alternativeName>
        <fullName>Beta-lactoglobulin II</fullName>
        <shortName>BLGII</shortName>
    </alternativeName>
    <alternativeName>
        <fullName>Minor monomeric beta-lactoglobulin</fullName>
    </alternativeName>
</protein>
<sequence length="181" mass="20123">MKCLLLALGLSLMCGNQATDIPQTMQDLDLQEVAGRWHSVAMVASDISLLDSESVPLRVYVEELRPTPEGNLEIILREGANHACVERNIVAQKTEDPAVFTVNYQGERKISVLDTDYAHYMFFCVGPPLPSAEHGMVCQYLARTQKVDEEVMEKFSRALQPLPGRVQIVQDPSGGQERCGF</sequence>
<proteinExistence type="evidence at protein level"/>
<gene>
    <name type="primary">LGB2</name>
</gene>
<comment type="function">
    <text>Lactoglobulin is the primary component of whey, it binds retinol and is probably involved in the transport of that molecule.</text>
</comment>
<comment type="subunit">
    <text>Monomer.</text>
</comment>
<comment type="subcellular location">
    <subcellularLocation>
        <location>Secreted</location>
    </subcellularLocation>
</comment>
<comment type="similarity">
    <text evidence="3">Belongs to the calycin superfamily. Lipocalin family.</text>
</comment>
<feature type="signal peptide" evidence="2">
    <location>
        <begin position="1"/>
        <end position="18"/>
    </location>
</feature>
<feature type="chain" id="PRO_0000017907" description="Beta-lactoglobulin-2">
    <location>
        <begin position="19"/>
        <end position="181"/>
    </location>
</feature>
<feature type="disulfide bond" evidence="1">
    <location>
        <begin position="84"/>
        <end position="179"/>
    </location>
</feature>
<feature type="disulfide bond" evidence="1">
    <location>
        <begin position="124"/>
        <end position="138"/>
    </location>
</feature>
<feature type="sequence conflict" description="In Ref. 3; AA sequence." evidence="3" ref="3">
    <original>SV</original>
    <variation>EA</variation>
    <location>
        <begin position="54"/>
        <end position="55"/>
    </location>
</feature>
<dbReference type="EMBL" id="U60978">
    <property type="protein sequence ID" value="AAB03622.1"/>
    <property type="molecule type" value="mRNA"/>
</dbReference>
<dbReference type="EMBL" id="AF107201">
    <property type="protein sequence ID" value="AAC95385.1"/>
    <property type="molecule type" value="Genomic_DNA"/>
</dbReference>
<dbReference type="PIR" id="A24654">
    <property type="entry name" value="LGHO2"/>
</dbReference>
<dbReference type="PIR" id="S14720">
    <property type="entry name" value="S14720"/>
</dbReference>
<dbReference type="RefSeq" id="NP_001075963.1">
    <property type="nucleotide sequence ID" value="NM_001082494.1"/>
</dbReference>
<dbReference type="SMR" id="P07380"/>
<dbReference type="FunCoup" id="P07380">
    <property type="interactions" value="3"/>
</dbReference>
<dbReference type="STRING" id="9796.ENSECAP00000010660"/>
<dbReference type="Allergome" id="1499">
    <property type="allergen name" value="Equ c BLG"/>
</dbReference>
<dbReference type="PaxDb" id="9796-ENSECAP00000010660"/>
<dbReference type="PeptideAtlas" id="P07380"/>
<dbReference type="GeneID" id="100034194"/>
<dbReference type="KEGG" id="ecb:100034194"/>
<dbReference type="CTD" id="100034194"/>
<dbReference type="InParanoid" id="P07380"/>
<dbReference type="OrthoDB" id="9835883at2759"/>
<dbReference type="Proteomes" id="UP000002281">
    <property type="component" value="Unplaced"/>
</dbReference>
<dbReference type="GO" id="GO:0005576">
    <property type="term" value="C:extracellular region"/>
    <property type="evidence" value="ECO:0007669"/>
    <property type="project" value="UniProtKB-SubCell"/>
</dbReference>
<dbReference type="GO" id="GO:0019841">
    <property type="term" value="F:retinol binding"/>
    <property type="evidence" value="ECO:0007669"/>
    <property type="project" value="UniProtKB-KW"/>
</dbReference>
<dbReference type="CDD" id="cd19416">
    <property type="entry name" value="lipocalin_beta-LG-like"/>
    <property type="match status" value="1"/>
</dbReference>
<dbReference type="Gene3D" id="2.40.128.20">
    <property type="match status" value="1"/>
</dbReference>
<dbReference type="InterPro" id="IPR002447">
    <property type="entry name" value="Blactoglobulin"/>
</dbReference>
<dbReference type="InterPro" id="IPR012674">
    <property type="entry name" value="Calycin"/>
</dbReference>
<dbReference type="InterPro" id="IPR002345">
    <property type="entry name" value="Lipocalin"/>
</dbReference>
<dbReference type="InterPro" id="IPR022272">
    <property type="entry name" value="Lipocalin_CS"/>
</dbReference>
<dbReference type="InterPro" id="IPR000566">
    <property type="entry name" value="Lipocln_cytosolic_FA-bd_dom"/>
</dbReference>
<dbReference type="PANTHER" id="PTHR11430:SF117">
    <property type="entry name" value="GLYCODELIN"/>
    <property type="match status" value="1"/>
</dbReference>
<dbReference type="PANTHER" id="PTHR11430">
    <property type="entry name" value="LIPOCALIN"/>
    <property type="match status" value="1"/>
</dbReference>
<dbReference type="Pfam" id="PF00061">
    <property type="entry name" value="Lipocalin"/>
    <property type="match status" value="1"/>
</dbReference>
<dbReference type="PRINTS" id="PR01172">
    <property type="entry name" value="BLCTOGLOBULN"/>
</dbReference>
<dbReference type="PRINTS" id="PR00179">
    <property type="entry name" value="LIPOCALIN"/>
</dbReference>
<dbReference type="SUPFAM" id="SSF50814">
    <property type="entry name" value="Lipocalins"/>
    <property type="match status" value="1"/>
</dbReference>
<dbReference type="PROSITE" id="PS00213">
    <property type="entry name" value="LIPOCALIN"/>
    <property type="match status" value="1"/>
</dbReference>
<accession>P07380</accession>
<accession>Q28395</accession>
<accession>Q549K0</accession>
<keyword id="KW-0903">Direct protein sequencing</keyword>
<keyword id="KW-1015">Disulfide bond</keyword>
<keyword id="KW-0494">Milk protein</keyword>
<keyword id="KW-1185">Reference proteome</keyword>
<keyword id="KW-0683">Retinol-binding</keyword>
<keyword id="KW-0964">Secreted</keyword>
<keyword id="KW-0732">Signal</keyword>
<keyword id="KW-0813">Transport</keyword>
<reference key="1">
    <citation type="submission" date="1996-07" db="EMBL/GenBank/DDBJ databases">
        <title>Comparison of the equine I and II beta-lactoglobulin genes.</title>
        <authorList>
            <person name="Masel A.M."/>
            <person name="Bell K.T."/>
        </authorList>
    </citation>
    <scope>NUCLEOTIDE SEQUENCE [MRNA]</scope>
</reference>
<reference key="2">
    <citation type="submission" date="1998-11" db="EMBL/GenBank/DDBJ databases">
        <title>Nucleotide sequence of the equine beta-lactoglobulin gene.</title>
        <authorList>
            <person name="Masel A.M."/>
            <person name="Brandon R.B."/>
            <person name="Bell T.K."/>
        </authorList>
    </citation>
    <scope>NUCLEOTIDE SEQUENCE [GENOMIC DNA]</scope>
</reference>
<reference key="3">
    <citation type="journal article" date="1985" name="Biol. Chem. Hoppe-Seyler">
        <title>The amino-acid sequence of beta-lactoglobulin II from horse colostrum (Equus caballus, Perissodactyla): beta-lactoglobulins are retinol-binding proteins.</title>
        <authorList>
            <person name="Godovac-Zimmermann J."/>
            <person name="Conti A."/>
            <person name="Liberatori J."/>
            <person name="Braunitzer G."/>
        </authorList>
    </citation>
    <scope>PROTEIN SEQUENCE OF 19-181</scope>
</reference>
<reference key="4">
    <citation type="journal article" date="1991" name="Biochim. Biophys. Acta">
        <title>The complete amino acid sequence of feline beta-lactoglobulin II and a partial revision of the equine beta-lactoglobulin II sequence.</title>
        <authorList>
            <person name="Halliday J.A."/>
            <person name="Bell K."/>
            <person name="Shaw D.C."/>
        </authorList>
    </citation>
    <scope>SEQUENCE REVISION TO 96-140</scope>
</reference>
<organism>
    <name type="scientific">Equus caballus</name>
    <name type="common">Horse</name>
    <dbReference type="NCBI Taxonomy" id="9796"/>
    <lineage>
        <taxon>Eukaryota</taxon>
        <taxon>Metazoa</taxon>
        <taxon>Chordata</taxon>
        <taxon>Craniata</taxon>
        <taxon>Vertebrata</taxon>
        <taxon>Euteleostomi</taxon>
        <taxon>Mammalia</taxon>
        <taxon>Eutheria</taxon>
        <taxon>Laurasiatheria</taxon>
        <taxon>Perissodactyla</taxon>
        <taxon>Equidae</taxon>
        <taxon>Equus</taxon>
    </lineage>
</organism>
<evidence type="ECO:0000250" key="1"/>
<evidence type="ECO:0000269" key="2">
    <source>
    </source>
</evidence>
<evidence type="ECO:0000305" key="3"/>